<reference key="1">
    <citation type="journal article" date="2003" name="Nat. Biotechnol.">
        <title>The genome sequence of the entomopathogenic bacterium Photorhabdus luminescens.</title>
        <authorList>
            <person name="Duchaud E."/>
            <person name="Rusniok C."/>
            <person name="Frangeul L."/>
            <person name="Buchrieser C."/>
            <person name="Givaudan A."/>
            <person name="Taourit S."/>
            <person name="Bocs S."/>
            <person name="Boursaux-Eude C."/>
            <person name="Chandler M."/>
            <person name="Charles J.-F."/>
            <person name="Dassa E."/>
            <person name="Derose R."/>
            <person name="Derzelle S."/>
            <person name="Freyssinet G."/>
            <person name="Gaudriault S."/>
            <person name="Medigue C."/>
            <person name="Lanois A."/>
            <person name="Powell K."/>
            <person name="Siguier P."/>
            <person name="Vincent R."/>
            <person name="Wingate V."/>
            <person name="Zouine M."/>
            <person name="Glaser P."/>
            <person name="Boemare N."/>
            <person name="Danchin A."/>
            <person name="Kunst F."/>
        </authorList>
    </citation>
    <scope>NUCLEOTIDE SEQUENCE [LARGE SCALE GENOMIC DNA]</scope>
    <source>
        <strain>DSM 15139 / CIP 105565 / TT01</strain>
    </source>
</reference>
<accession>Q7N9E9</accession>
<gene>
    <name evidence="1" type="primary">engB</name>
    <name type="ordered locus">plu0390</name>
</gene>
<proteinExistence type="inferred from homology"/>
<organism>
    <name type="scientific">Photorhabdus laumondii subsp. laumondii (strain DSM 15139 / CIP 105565 / TT01)</name>
    <name type="common">Photorhabdus luminescens subsp. laumondii</name>
    <dbReference type="NCBI Taxonomy" id="243265"/>
    <lineage>
        <taxon>Bacteria</taxon>
        <taxon>Pseudomonadati</taxon>
        <taxon>Pseudomonadota</taxon>
        <taxon>Gammaproteobacteria</taxon>
        <taxon>Enterobacterales</taxon>
        <taxon>Morganellaceae</taxon>
        <taxon>Photorhabdus</taxon>
    </lineage>
</organism>
<name>ENGB_PHOLL</name>
<evidence type="ECO:0000255" key="1">
    <source>
        <dbReference type="HAMAP-Rule" id="MF_00321"/>
    </source>
</evidence>
<feature type="chain" id="PRO_0000266914" description="Probable GTP-binding protein EngB">
    <location>
        <begin position="1"/>
        <end position="210"/>
    </location>
</feature>
<feature type="domain" description="EngB-type G" evidence="1">
    <location>
        <begin position="27"/>
        <end position="201"/>
    </location>
</feature>
<feature type="binding site" evidence="1">
    <location>
        <begin position="35"/>
        <end position="42"/>
    </location>
    <ligand>
        <name>GTP</name>
        <dbReference type="ChEBI" id="CHEBI:37565"/>
    </ligand>
</feature>
<feature type="binding site" evidence="1">
    <location>
        <position position="42"/>
    </location>
    <ligand>
        <name>Mg(2+)</name>
        <dbReference type="ChEBI" id="CHEBI:18420"/>
    </ligand>
</feature>
<feature type="binding site" evidence="1">
    <location>
        <begin position="62"/>
        <end position="66"/>
    </location>
    <ligand>
        <name>GTP</name>
        <dbReference type="ChEBI" id="CHEBI:37565"/>
    </ligand>
</feature>
<feature type="binding site" evidence="1">
    <location>
        <position position="64"/>
    </location>
    <ligand>
        <name>Mg(2+)</name>
        <dbReference type="ChEBI" id="CHEBI:18420"/>
    </ligand>
</feature>
<feature type="binding site" evidence="1">
    <location>
        <begin position="80"/>
        <end position="83"/>
    </location>
    <ligand>
        <name>GTP</name>
        <dbReference type="ChEBI" id="CHEBI:37565"/>
    </ligand>
</feature>
<feature type="binding site" evidence="1">
    <location>
        <begin position="147"/>
        <end position="150"/>
    </location>
    <ligand>
        <name>GTP</name>
        <dbReference type="ChEBI" id="CHEBI:37565"/>
    </ligand>
</feature>
<feature type="binding site" evidence="1">
    <location>
        <begin position="180"/>
        <end position="182"/>
    </location>
    <ligand>
        <name>GTP</name>
        <dbReference type="ChEBI" id="CHEBI:37565"/>
    </ligand>
</feature>
<comment type="function">
    <text evidence="1">Necessary for normal cell division and for the maintenance of normal septation.</text>
</comment>
<comment type="cofactor">
    <cofactor evidence="1">
        <name>Mg(2+)</name>
        <dbReference type="ChEBI" id="CHEBI:18420"/>
    </cofactor>
</comment>
<comment type="similarity">
    <text evidence="1">Belongs to the TRAFAC class TrmE-Era-EngA-EngB-Septin-like GTPase superfamily. EngB GTPase family.</text>
</comment>
<protein>
    <recommendedName>
        <fullName evidence="1">Probable GTP-binding protein EngB</fullName>
    </recommendedName>
</protein>
<dbReference type="EMBL" id="BX571860">
    <property type="protein sequence ID" value="CAE12685.1"/>
    <property type="molecule type" value="Genomic_DNA"/>
</dbReference>
<dbReference type="RefSeq" id="WP_011144777.1">
    <property type="nucleotide sequence ID" value="NC_005126.1"/>
</dbReference>
<dbReference type="SMR" id="Q7N9E9"/>
<dbReference type="STRING" id="243265.plu0390"/>
<dbReference type="GeneID" id="48846675"/>
<dbReference type="KEGG" id="plu:plu0390"/>
<dbReference type="eggNOG" id="COG0218">
    <property type="taxonomic scope" value="Bacteria"/>
</dbReference>
<dbReference type="HOGENOM" id="CLU_033732_1_0_6"/>
<dbReference type="OrthoDB" id="9804921at2"/>
<dbReference type="Proteomes" id="UP000002514">
    <property type="component" value="Chromosome"/>
</dbReference>
<dbReference type="GO" id="GO:0005829">
    <property type="term" value="C:cytosol"/>
    <property type="evidence" value="ECO:0007669"/>
    <property type="project" value="TreeGrafter"/>
</dbReference>
<dbReference type="GO" id="GO:0005525">
    <property type="term" value="F:GTP binding"/>
    <property type="evidence" value="ECO:0007669"/>
    <property type="project" value="UniProtKB-UniRule"/>
</dbReference>
<dbReference type="GO" id="GO:0046872">
    <property type="term" value="F:metal ion binding"/>
    <property type="evidence" value="ECO:0007669"/>
    <property type="project" value="UniProtKB-KW"/>
</dbReference>
<dbReference type="GO" id="GO:0000917">
    <property type="term" value="P:division septum assembly"/>
    <property type="evidence" value="ECO:0007669"/>
    <property type="project" value="UniProtKB-KW"/>
</dbReference>
<dbReference type="CDD" id="cd01876">
    <property type="entry name" value="YihA_EngB"/>
    <property type="match status" value="1"/>
</dbReference>
<dbReference type="FunFam" id="3.40.50.300:FF:000098">
    <property type="entry name" value="Probable GTP-binding protein EngB"/>
    <property type="match status" value="1"/>
</dbReference>
<dbReference type="Gene3D" id="3.40.50.300">
    <property type="entry name" value="P-loop containing nucleotide triphosphate hydrolases"/>
    <property type="match status" value="1"/>
</dbReference>
<dbReference type="HAMAP" id="MF_00321">
    <property type="entry name" value="GTPase_EngB"/>
    <property type="match status" value="1"/>
</dbReference>
<dbReference type="InterPro" id="IPR030393">
    <property type="entry name" value="G_ENGB_dom"/>
</dbReference>
<dbReference type="InterPro" id="IPR006073">
    <property type="entry name" value="GTP-bd"/>
</dbReference>
<dbReference type="InterPro" id="IPR019987">
    <property type="entry name" value="GTP-bd_ribosome_bio_YsxC"/>
</dbReference>
<dbReference type="InterPro" id="IPR027417">
    <property type="entry name" value="P-loop_NTPase"/>
</dbReference>
<dbReference type="NCBIfam" id="TIGR03598">
    <property type="entry name" value="GTPase_YsxC"/>
    <property type="match status" value="1"/>
</dbReference>
<dbReference type="PANTHER" id="PTHR11649:SF13">
    <property type="entry name" value="ENGB-TYPE G DOMAIN-CONTAINING PROTEIN"/>
    <property type="match status" value="1"/>
</dbReference>
<dbReference type="PANTHER" id="PTHR11649">
    <property type="entry name" value="MSS1/TRME-RELATED GTP-BINDING PROTEIN"/>
    <property type="match status" value="1"/>
</dbReference>
<dbReference type="Pfam" id="PF01926">
    <property type="entry name" value="MMR_HSR1"/>
    <property type="match status" value="1"/>
</dbReference>
<dbReference type="SUPFAM" id="SSF52540">
    <property type="entry name" value="P-loop containing nucleoside triphosphate hydrolases"/>
    <property type="match status" value="1"/>
</dbReference>
<dbReference type="PROSITE" id="PS51706">
    <property type="entry name" value="G_ENGB"/>
    <property type="match status" value="1"/>
</dbReference>
<keyword id="KW-0131">Cell cycle</keyword>
<keyword id="KW-0132">Cell division</keyword>
<keyword id="KW-0342">GTP-binding</keyword>
<keyword id="KW-0460">Magnesium</keyword>
<keyword id="KW-0479">Metal-binding</keyword>
<keyword id="KW-0547">Nucleotide-binding</keyword>
<keyword id="KW-1185">Reference proteome</keyword>
<keyword id="KW-0717">Septation</keyword>
<sequence>MTIKNHNYHMTRFITSAPDIRHLPQDMGIEVAFAGRSNAGKSSALNALTKQKSLARTSKTPGRTQLINLFEVEEGIRLVDLPGYGYAEVPEEMKRKWQKALGEYLQKRECLIGLVVLMDIRHPLKDLDQQMIQWAVAMQVPVMVLLTKADKLASGARKSQLNKVRDALLALNGDIQVEYFSVPKKIGIDKLHQKLDIWFSQKAVQVENHR</sequence>